<reference key="1">
    <citation type="journal article" date="2002" name="J. Bacteriol.">
        <title>Whole-genome comparison of Mycobacterium tuberculosis clinical and laboratory strains.</title>
        <authorList>
            <person name="Fleischmann R.D."/>
            <person name="Alland D."/>
            <person name="Eisen J.A."/>
            <person name="Carpenter L."/>
            <person name="White O."/>
            <person name="Peterson J.D."/>
            <person name="DeBoy R.T."/>
            <person name="Dodson R.J."/>
            <person name="Gwinn M.L."/>
            <person name="Haft D.H."/>
            <person name="Hickey E.K."/>
            <person name="Kolonay J.F."/>
            <person name="Nelson W.C."/>
            <person name="Umayam L.A."/>
            <person name="Ermolaeva M.D."/>
            <person name="Salzberg S.L."/>
            <person name="Delcher A."/>
            <person name="Utterback T.R."/>
            <person name="Weidman J.F."/>
            <person name="Khouri H.M."/>
            <person name="Gill J."/>
            <person name="Mikula A."/>
            <person name="Bishai W."/>
            <person name="Jacobs W.R. Jr."/>
            <person name="Venter J.C."/>
            <person name="Fraser C.M."/>
        </authorList>
    </citation>
    <scope>NUCLEOTIDE SEQUENCE [LARGE SCALE GENOMIC DNA]</scope>
    <source>
        <strain>CDC 1551 / Oshkosh</strain>
    </source>
</reference>
<organism>
    <name type="scientific">Mycobacterium tuberculosis (strain CDC 1551 / Oshkosh)</name>
    <dbReference type="NCBI Taxonomy" id="83331"/>
    <lineage>
        <taxon>Bacteria</taxon>
        <taxon>Bacillati</taxon>
        <taxon>Actinomycetota</taxon>
        <taxon>Actinomycetes</taxon>
        <taxon>Mycobacteriales</taxon>
        <taxon>Mycobacteriaceae</taxon>
        <taxon>Mycobacterium</taxon>
        <taxon>Mycobacterium tuberculosis complex</taxon>
    </lineage>
</organism>
<proteinExistence type="inferred from homology"/>
<dbReference type="EC" id="2.4.2.4"/>
<dbReference type="EMBL" id="AE000516">
    <property type="protein sequence ID" value="AAK47757.1"/>
    <property type="molecule type" value="Genomic_DNA"/>
</dbReference>
<dbReference type="PIR" id="A70843">
    <property type="entry name" value="A70843"/>
</dbReference>
<dbReference type="RefSeq" id="WP_003900016.1">
    <property type="nucleotide sequence ID" value="NZ_KK341227.1"/>
</dbReference>
<dbReference type="SMR" id="P9WFS0"/>
<dbReference type="KEGG" id="mtc:MT3415"/>
<dbReference type="PATRIC" id="fig|83331.31.peg.3674"/>
<dbReference type="HOGENOM" id="CLU_025040_0_1_11"/>
<dbReference type="Proteomes" id="UP000001020">
    <property type="component" value="Chromosome"/>
</dbReference>
<dbReference type="GO" id="GO:0005829">
    <property type="term" value="C:cytosol"/>
    <property type="evidence" value="ECO:0007669"/>
    <property type="project" value="TreeGrafter"/>
</dbReference>
<dbReference type="GO" id="GO:0004645">
    <property type="term" value="F:1,4-alpha-oligoglucan phosphorylase activity"/>
    <property type="evidence" value="ECO:0007669"/>
    <property type="project" value="InterPro"/>
</dbReference>
<dbReference type="GO" id="GO:0009032">
    <property type="term" value="F:thymidine phosphorylase activity"/>
    <property type="evidence" value="ECO:0007669"/>
    <property type="project" value="UniProtKB-EC"/>
</dbReference>
<dbReference type="GO" id="GO:0006206">
    <property type="term" value="P:pyrimidine nucleobase metabolic process"/>
    <property type="evidence" value="ECO:0007669"/>
    <property type="project" value="InterPro"/>
</dbReference>
<dbReference type="GO" id="GO:0006213">
    <property type="term" value="P:pyrimidine nucleoside metabolic process"/>
    <property type="evidence" value="ECO:0007669"/>
    <property type="project" value="InterPro"/>
</dbReference>
<dbReference type="FunFam" id="3.40.1030.10:FF:000003">
    <property type="entry name" value="Pyrimidine-nucleoside phosphorylase"/>
    <property type="match status" value="1"/>
</dbReference>
<dbReference type="FunFam" id="1.20.970.10:FF:000004">
    <property type="entry name" value="Thymidine phosphorylase"/>
    <property type="match status" value="1"/>
</dbReference>
<dbReference type="FunFam" id="3.90.1170.30:FF:000005">
    <property type="entry name" value="Thymidine phosphorylase"/>
    <property type="match status" value="1"/>
</dbReference>
<dbReference type="Gene3D" id="3.40.1030.10">
    <property type="entry name" value="Nucleoside phosphorylase/phosphoribosyltransferase catalytic domain"/>
    <property type="match status" value="1"/>
</dbReference>
<dbReference type="Gene3D" id="3.90.1170.30">
    <property type="entry name" value="Pyrimidine nucleoside phosphorylase-like, C-terminal domain"/>
    <property type="match status" value="1"/>
</dbReference>
<dbReference type="Gene3D" id="1.20.970.10">
    <property type="entry name" value="Transferase, Pyrimidine Nucleoside Phosphorylase, Chain C"/>
    <property type="match status" value="1"/>
</dbReference>
<dbReference type="InterPro" id="IPR000312">
    <property type="entry name" value="Glycosyl_Trfase_fam3"/>
</dbReference>
<dbReference type="InterPro" id="IPR017459">
    <property type="entry name" value="Glycosyl_Trfase_fam3_N_dom"/>
</dbReference>
<dbReference type="InterPro" id="IPR036320">
    <property type="entry name" value="Glycosyl_Trfase_fam3_N_dom_sf"/>
</dbReference>
<dbReference type="InterPro" id="IPR035902">
    <property type="entry name" value="Nuc_phospho_transferase"/>
</dbReference>
<dbReference type="InterPro" id="IPR036566">
    <property type="entry name" value="PYNP-like_C_sf"/>
</dbReference>
<dbReference type="InterPro" id="IPR013102">
    <property type="entry name" value="PYNP_C"/>
</dbReference>
<dbReference type="InterPro" id="IPR018090">
    <property type="entry name" value="Pyrmidine_PPas_bac/euk"/>
</dbReference>
<dbReference type="InterPro" id="IPR017872">
    <property type="entry name" value="Pyrmidine_PPase_CS"/>
</dbReference>
<dbReference type="InterPro" id="IPR000053">
    <property type="entry name" value="Thymidine/pyrmidine_PPase"/>
</dbReference>
<dbReference type="NCBIfam" id="NF004490">
    <property type="entry name" value="PRK05820.1"/>
    <property type="match status" value="1"/>
</dbReference>
<dbReference type="NCBIfam" id="TIGR02644">
    <property type="entry name" value="Y_phosphoryl"/>
    <property type="match status" value="1"/>
</dbReference>
<dbReference type="PANTHER" id="PTHR10515">
    <property type="entry name" value="THYMIDINE PHOSPHORYLASE"/>
    <property type="match status" value="1"/>
</dbReference>
<dbReference type="PANTHER" id="PTHR10515:SF0">
    <property type="entry name" value="THYMIDINE PHOSPHORYLASE"/>
    <property type="match status" value="1"/>
</dbReference>
<dbReference type="Pfam" id="PF02885">
    <property type="entry name" value="Glycos_trans_3N"/>
    <property type="match status" value="1"/>
</dbReference>
<dbReference type="Pfam" id="PF00591">
    <property type="entry name" value="Glycos_transf_3"/>
    <property type="match status" value="1"/>
</dbReference>
<dbReference type="Pfam" id="PF07831">
    <property type="entry name" value="PYNP_C"/>
    <property type="match status" value="1"/>
</dbReference>
<dbReference type="PIRSF" id="PIRSF000478">
    <property type="entry name" value="TP_PyNP"/>
    <property type="match status" value="1"/>
</dbReference>
<dbReference type="SMART" id="SM00941">
    <property type="entry name" value="PYNP_C"/>
    <property type="match status" value="1"/>
</dbReference>
<dbReference type="SUPFAM" id="SSF52418">
    <property type="entry name" value="Nucleoside phosphorylase/phosphoribosyltransferase catalytic domain"/>
    <property type="match status" value="1"/>
</dbReference>
<dbReference type="SUPFAM" id="SSF47648">
    <property type="entry name" value="Nucleoside phosphorylase/phosphoribosyltransferase N-terminal domain"/>
    <property type="match status" value="1"/>
</dbReference>
<dbReference type="SUPFAM" id="SSF54680">
    <property type="entry name" value="Pyrimidine nucleoside phosphorylase C-terminal domain"/>
    <property type="match status" value="1"/>
</dbReference>
<dbReference type="PROSITE" id="PS00647">
    <property type="entry name" value="THYMID_PHOSPHORYLASE"/>
    <property type="match status" value="1"/>
</dbReference>
<sequence length="427" mass="44486">MTDFAFDAPTVIRTKRDGGRLSDAAIDWVVKAYTDGRVADEQMSALLMAIVWRGMDRGEIARWTAAMLASGARLDFTDLPLATVDKHSTGGVGDKITLPLVPVVAACGGAVPQASGRGLGHTGGTLDKLESITGFTANLSNQRVREQLCDVGAAIFAAGQLAPADAKLYALRDITGTVESLPLIASSIMSKKLAEGAGALVLDVKVGSGAFMRSPVQARELAHTMVELGAAHGVPTRALLTEMNCPLGRTVGNALEVAEALEVLAGGGPPDVVELTLRLAGEMLELAGIHGRDPAQTLRDGTAMDRFRRLVAAQGGDLSKPLPIGSHSETVTAGASGTMGDIDAMAVGLAAWRLGAGRSRPGARVQHGAGVRIHRRPGEPVVVGEPLFTLYTNAPERFGAARAELAGGWSIRDSPPQVRPLIVDRIV</sequence>
<comment type="function">
    <text evidence="1">The enzymes which catalyze the reversible phosphorolysis of pyrimidine nucleosides are involved in the degradation of these compounds and in their utilization as carbon and energy sources, or in the rescue of pyrimidine bases for nucleotide synthesis.</text>
</comment>
<comment type="catalytic activity">
    <reaction>
        <text>thymidine + phosphate = 2-deoxy-alpha-D-ribose 1-phosphate + thymine</text>
        <dbReference type="Rhea" id="RHEA:16037"/>
        <dbReference type="ChEBI" id="CHEBI:17748"/>
        <dbReference type="ChEBI" id="CHEBI:17821"/>
        <dbReference type="ChEBI" id="CHEBI:43474"/>
        <dbReference type="ChEBI" id="CHEBI:57259"/>
        <dbReference type="EC" id="2.4.2.4"/>
    </reaction>
</comment>
<comment type="subunit">
    <text evidence="1">Homodimer.</text>
</comment>
<comment type="similarity">
    <text evidence="2">Belongs to the thymidine/pyrimidine-nucleoside phosphorylase family.</text>
</comment>
<protein>
    <recommendedName>
        <fullName>Thymidine phosphorylase</fullName>
        <ecNumber>2.4.2.4</ecNumber>
    </recommendedName>
    <alternativeName>
        <fullName>TdRPase</fullName>
    </alternativeName>
</protein>
<accession>P9WFS0</accession>
<accession>L0TF92</accession>
<accession>O53366</accession>
<feature type="chain" id="PRO_0000428488" description="Thymidine phosphorylase">
    <location>
        <begin position="1"/>
        <end position="427"/>
    </location>
</feature>
<gene>
    <name type="primary">deoA</name>
    <name type="ordered locus">MT3415</name>
</gene>
<keyword id="KW-0328">Glycosyltransferase</keyword>
<keyword id="KW-1185">Reference proteome</keyword>
<keyword id="KW-0808">Transferase</keyword>
<evidence type="ECO:0000250" key="1"/>
<evidence type="ECO:0000305" key="2"/>
<name>TYPH_MYCTO</name>